<organism>
    <name type="scientific">Latilactobacillus sakei subsp. sakei (strain 23K)</name>
    <name type="common">Lactobacillus sakei subsp. sakei</name>
    <dbReference type="NCBI Taxonomy" id="314315"/>
    <lineage>
        <taxon>Bacteria</taxon>
        <taxon>Bacillati</taxon>
        <taxon>Bacillota</taxon>
        <taxon>Bacilli</taxon>
        <taxon>Lactobacillales</taxon>
        <taxon>Lactobacillaceae</taxon>
        <taxon>Latilactobacillus</taxon>
    </lineage>
</organism>
<proteinExistence type="inferred from homology"/>
<dbReference type="EC" id="3.5.99.6" evidence="1"/>
<dbReference type="EMBL" id="CR936503">
    <property type="protein sequence ID" value="CAI54718.1"/>
    <property type="molecule type" value="Genomic_DNA"/>
</dbReference>
<dbReference type="RefSeq" id="WP_011374126.1">
    <property type="nucleotide sequence ID" value="NC_007576.1"/>
</dbReference>
<dbReference type="SMR" id="Q38YK9"/>
<dbReference type="STRING" id="314315.LCA_0417"/>
<dbReference type="KEGG" id="lsa:LCA_0417"/>
<dbReference type="eggNOG" id="COG0363">
    <property type="taxonomic scope" value="Bacteria"/>
</dbReference>
<dbReference type="HOGENOM" id="CLU_049611_1_0_9"/>
<dbReference type="OrthoDB" id="9791139at2"/>
<dbReference type="UniPathway" id="UPA00629">
    <property type="reaction ID" value="UER00684"/>
</dbReference>
<dbReference type="Proteomes" id="UP000002707">
    <property type="component" value="Chromosome"/>
</dbReference>
<dbReference type="GO" id="GO:0005737">
    <property type="term" value="C:cytoplasm"/>
    <property type="evidence" value="ECO:0007669"/>
    <property type="project" value="TreeGrafter"/>
</dbReference>
<dbReference type="GO" id="GO:0004342">
    <property type="term" value="F:glucosamine-6-phosphate deaminase activity"/>
    <property type="evidence" value="ECO:0007669"/>
    <property type="project" value="UniProtKB-UniRule"/>
</dbReference>
<dbReference type="GO" id="GO:0042802">
    <property type="term" value="F:identical protein binding"/>
    <property type="evidence" value="ECO:0007669"/>
    <property type="project" value="TreeGrafter"/>
</dbReference>
<dbReference type="GO" id="GO:0005975">
    <property type="term" value="P:carbohydrate metabolic process"/>
    <property type="evidence" value="ECO:0007669"/>
    <property type="project" value="InterPro"/>
</dbReference>
<dbReference type="GO" id="GO:0006043">
    <property type="term" value="P:glucosamine catabolic process"/>
    <property type="evidence" value="ECO:0007669"/>
    <property type="project" value="TreeGrafter"/>
</dbReference>
<dbReference type="GO" id="GO:0006046">
    <property type="term" value="P:N-acetylglucosamine catabolic process"/>
    <property type="evidence" value="ECO:0007669"/>
    <property type="project" value="TreeGrafter"/>
</dbReference>
<dbReference type="GO" id="GO:0019262">
    <property type="term" value="P:N-acetylneuraminate catabolic process"/>
    <property type="evidence" value="ECO:0007669"/>
    <property type="project" value="UniProtKB-UniRule"/>
</dbReference>
<dbReference type="CDD" id="cd01399">
    <property type="entry name" value="GlcN6P_deaminase"/>
    <property type="match status" value="1"/>
</dbReference>
<dbReference type="FunFam" id="3.40.50.1360:FF:000003">
    <property type="entry name" value="Glucosamine-6-phosphate deaminase"/>
    <property type="match status" value="1"/>
</dbReference>
<dbReference type="Gene3D" id="3.40.50.1360">
    <property type="match status" value="1"/>
</dbReference>
<dbReference type="HAMAP" id="MF_01241">
    <property type="entry name" value="GlcN6P_deamin"/>
    <property type="match status" value="1"/>
</dbReference>
<dbReference type="InterPro" id="IPR006148">
    <property type="entry name" value="Glc/Gal-6P_isomerase"/>
</dbReference>
<dbReference type="InterPro" id="IPR004547">
    <property type="entry name" value="Glucosamine6P_isomerase"/>
</dbReference>
<dbReference type="InterPro" id="IPR018321">
    <property type="entry name" value="Glucosamine6P_isomerase_CS"/>
</dbReference>
<dbReference type="InterPro" id="IPR037171">
    <property type="entry name" value="NagB/RpiA_transferase-like"/>
</dbReference>
<dbReference type="PANTHER" id="PTHR11280">
    <property type="entry name" value="GLUCOSAMINE-6-PHOSPHATE ISOMERASE"/>
    <property type="match status" value="1"/>
</dbReference>
<dbReference type="PANTHER" id="PTHR11280:SF5">
    <property type="entry name" value="GLUCOSAMINE-6-PHOSPHATE ISOMERASE"/>
    <property type="match status" value="1"/>
</dbReference>
<dbReference type="Pfam" id="PF01182">
    <property type="entry name" value="Glucosamine_iso"/>
    <property type="match status" value="1"/>
</dbReference>
<dbReference type="SUPFAM" id="SSF100950">
    <property type="entry name" value="NagB/RpiA/CoA transferase-like"/>
    <property type="match status" value="1"/>
</dbReference>
<dbReference type="PROSITE" id="PS01161">
    <property type="entry name" value="GLC_GALNAC_ISOMERASE"/>
    <property type="match status" value="1"/>
</dbReference>
<feature type="chain" id="PRO_1000066999" description="Glucosamine-6-phosphate deaminase">
    <location>
        <begin position="1"/>
        <end position="235"/>
    </location>
</feature>
<feature type="active site" description="Proton acceptor; for enolization step" evidence="1">
    <location>
        <position position="62"/>
    </location>
</feature>
<feature type="active site" description="For ring-opening step" evidence="1">
    <location>
        <position position="128"/>
    </location>
</feature>
<feature type="active site" description="Proton acceptor; for ring-opening step" evidence="1">
    <location>
        <position position="130"/>
    </location>
</feature>
<feature type="active site" description="For ring-opening step" evidence="1">
    <location>
        <position position="135"/>
    </location>
</feature>
<reference key="1">
    <citation type="journal article" date="2005" name="Nat. Biotechnol.">
        <title>The complete genome sequence of the meat-borne lactic acid bacterium Lactobacillus sakei 23K.</title>
        <authorList>
            <person name="Chaillou S."/>
            <person name="Champomier-Verges M.-C."/>
            <person name="Cornet M."/>
            <person name="Crutz-Le Coq A.-M."/>
            <person name="Dudez A.-M."/>
            <person name="Martin V."/>
            <person name="Beaufils S."/>
            <person name="Darbon-Rongere E."/>
            <person name="Bossy R."/>
            <person name="Loux V."/>
            <person name="Zagorec M."/>
        </authorList>
    </citation>
    <scope>NUCLEOTIDE SEQUENCE [LARGE SCALE GENOMIC DNA]</scope>
    <source>
        <strain>23K</strain>
    </source>
</reference>
<comment type="function">
    <text evidence="1">Catalyzes the reversible isomerization-deamination of glucosamine 6-phosphate (GlcN6P) to form fructose 6-phosphate (Fru6P) and ammonium ion.</text>
</comment>
<comment type="catalytic activity">
    <reaction evidence="1">
        <text>alpha-D-glucosamine 6-phosphate + H2O = beta-D-fructose 6-phosphate + NH4(+)</text>
        <dbReference type="Rhea" id="RHEA:12172"/>
        <dbReference type="ChEBI" id="CHEBI:15377"/>
        <dbReference type="ChEBI" id="CHEBI:28938"/>
        <dbReference type="ChEBI" id="CHEBI:57634"/>
        <dbReference type="ChEBI" id="CHEBI:75989"/>
        <dbReference type="EC" id="3.5.99.6"/>
    </reaction>
</comment>
<comment type="pathway">
    <text evidence="1">Amino-sugar metabolism; N-acetylneuraminate degradation; D-fructose 6-phosphate from N-acetylneuraminate: step 5/5.</text>
</comment>
<comment type="similarity">
    <text evidence="1">Belongs to the glucosamine/galactosamine-6-phosphate isomerase family. NagB subfamily.</text>
</comment>
<protein>
    <recommendedName>
        <fullName evidence="1">Glucosamine-6-phosphate deaminase</fullName>
        <ecNumber evidence="1">3.5.99.6</ecNumber>
    </recommendedName>
    <alternativeName>
        <fullName evidence="1">GlcN6P deaminase</fullName>
        <shortName evidence="1">GNPDA</shortName>
    </alternativeName>
    <alternativeName>
        <fullName evidence="1">Glucosamine-6-phosphate isomerase</fullName>
    </alternativeName>
</protein>
<gene>
    <name evidence="1" type="primary">nagB</name>
    <name type="ordered locus">LCA_0417</name>
</gene>
<sequence length="235" mass="25377">MKIIKVKDQVEGGQKGFEIFKEGLANDAKVFGLATGSSPIKFYETVVASDLDFTNCTSVNLDEYVGLSADNSQSYHYFMKENLFNKKPFAKSYLPNGLASDIPAELKRYDQVIADNPVDIQILGIGQNGHIGFNEPGAAFDSNTQEVQLTESTIKANARFFENEADVPTKAISMGIGSILKAKKIVLFAYGESKAEAIKGTVEGPQTTDVPASALQLHDDVTIIVDEAAASLLSK</sequence>
<accession>Q38YK9</accession>
<name>NAGB_LATSS</name>
<keyword id="KW-0119">Carbohydrate metabolism</keyword>
<keyword id="KW-0378">Hydrolase</keyword>
<keyword id="KW-1185">Reference proteome</keyword>
<evidence type="ECO:0000255" key="1">
    <source>
        <dbReference type="HAMAP-Rule" id="MF_01241"/>
    </source>
</evidence>